<feature type="chain" id="PRO_0000300218" description="Cell division activator CedA">
    <location>
        <begin position="1"/>
        <end position="80"/>
    </location>
</feature>
<organism>
    <name type="scientific">Shigella sonnei (strain Ss046)</name>
    <dbReference type="NCBI Taxonomy" id="300269"/>
    <lineage>
        <taxon>Bacteria</taxon>
        <taxon>Pseudomonadati</taxon>
        <taxon>Pseudomonadota</taxon>
        <taxon>Gammaproteobacteria</taxon>
        <taxon>Enterobacterales</taxon>
        <taxon>Enterobacteriaceae</taxon>
        <taxon>Shigella</taxon>
    </lineage>
</organism>
<comment type="function">
    <text evidence="1">Activates the cell division inhibited by chromosomal DNA over-replication.</text>
</comment>
<comment type="similarity">
    <text evidence="1">Belongs to the CedA family.</text>
</comment>
<comment type="sequence caution" evidence="2">
    <conflict type="erroneous initiation">
        <sequence resource="EMBL-CDS" id="AAZ88134"/>
    </conflict>
</comment>
<name>CEDA_SHISS</name>
<dbReference type="EMBL" id="CP000038">
    <property type="protein sequence ID" value="AAZ88134.1"/>
    <property type="status" value="ALT_INIT"/>
    <property type="molecule type" value="Genomic_DNA"/>
</dbReference>
<dbReference type="SMR" id="Q3Z278"/>
<dbReference type="KEGG" id="ssn:SSON_1427"/>
<dbReference type="HOGENOM" id="CLU_167445_0_0_6"/>
<dbReference type="Proteomes" id="UP000002529">
    <property type="component" value="Chromosome"/>
</dbReference>
<dbReference type="GO" id="GO:0003677">
    <property type="term" value="F:DNA binding"/>
    <property type="evidence" value="ECO:0007669"/>
    <property type="project" value="UniProtKB-UniRule"/>
</dbReference>
<dbReference type="GO" id="GO:0051301">
    <property type="term" value="P:cell division"/>
    <property type="evidence" value="ECO:0007669"/>
    <property type="project" value="UniProtKB-UniRule"/>
</dbReference>
<dbReference type="FunFam" id="3.30.730.20:FF:000001">
    <property type="entry name" value="Cell division activator CedA"/>
    <property type="match status" value="1"/>
</dbReference>
<dbReference type="Gene3D" id="3.30.730.20">
    <property type="entry name" value="Cell division activator CedA"/>
    <property type="match status" value="1"/>
</dbReference>
<dbReference type="HAMAP" id="MF_01580">
    <property type="entry name" value="CedA"/>
    <property type="match status" value="1"/>
</dbReference>
<dbReference type="InterPro" id="IPR038463">
    <property type="entry name" value="CedA-like_sf"/>
</dbReference>
<dbReference type="InterPro" id="IPR019666">
    <property type="entry name" value="Cell_div_activator_CedA"/>
</dbReference>
<dbReference type="NCBIfam" id="NF007510">
    <property type="entry name" value="PRK10113.1"/>
    <property type="match status" value="1"/>
</dbReference>
<dbReference type="Pfam" id="PF10729">
    <property type="entry name" value="CedA"/>
    <property type="match status" value="1"/>
</dbReference>
<proteinExistence type="inferred from homology"/>
<evidence type="ECO:0000255" key="1">
    <source>
        <dbReference type="HAMAP-Rule" id="MF_01580"/>
    </source>
</evidence>
<evidence type="ECO:0000305" key="2"/>
<accession>Q3Z278</accession>
<gene>
    <name evidence="1" type="primary">cedA</name>
    <name type="ordered locus">SSON_1427</name>
</gene>
<protein>
    <recommendedName>
        <fullName evidence="1">Cell division activator CedA</fullName>
    </recommendedName>
</protein>
<reference key="1">
    <citation type="journal article" date="2005" name="Nucleic Acids Res.">
        <title>Genome dynamics and diversity of Shigella species, the etiologic agents of bacillary dysentery.</title>
        <authorList>
            <person name="Yang F."/>
            <person name="Yang J."/>
            <person name="Zhang X."/>
            <person name="Chen L."/>
            <person name="Jiang Y."/>
            <person name="Yan Y."/>
            <person name="Tang X."/>
            <person name="Wang J."/>
            <person name="Xiong Z."/>
            <person name="Dong J."/>
            <person name="Xue Y."/>
            <person name="Zhu Y."/>
            <person name="Xu X."/>
            <person name="Sun L."/>
            <person name="Chen S."/>
            <person name="Nie H."/>
            <person name="Peng J."/>
            <person name="Xu J."/>
            <person name="Wang Y."/>
            <person name="Yuan Z."/>
            <person name="Wen Y."/>
            <person name="Yao Z."/>
            <person name="Shen Y."/>
            <person name="Qiang B."/>
            <person name="Hou Y."/>
            <person name="Yu J."/>
            <person name="Jin Q."/>
        </authorList>
    </citation>
    <scope>NUCLEOTIDE SEQUENCE [LARGE SCALE GENOMIC DNA]</scope>
    <source>
        <strain>Ss046</strain>
    </source>
</reference>
<keyword id="KW-0131">Cell cycle</keyword>
<keyword id="KW-0132">Cell division</keyword>
<keyword id="KW-0238">DNA-binding</keyword>
<keyword id="KW-1185">Reference proteome</keyword>
<sequence length="80" mass="9377">MKKPLRQQNRQIISYVPRTEPAPPEHAIKMDSFRDVWMLRGKYVAFVLMGESFLRSPAFTVPESAQRWANQIRQEGEVTE</sequence>